<name>YQGF_HAEIG</name>
<proteinExistence type="inferred from homology"/>
<feature type="chain" id="PRO_1000061523" description="Putative pre-16S rRNA nuclease">
    <location>
        <begin position="1"/>
        <end position="139"/>
    </location>
</feature>
<organism>
    <name type="scientific">Haemophilus influenzae (strain PittGG)</name>
    <dbReference type="NCBI Taxonomy" id="374931"/>
    <lineage>
        <taxon>Bacteria</taxon>
        <taxon>Pseudomonadati</taxon>
        <taxon>Pseudomonadota</taxon>
        <taxon>Gammaproteobacteria</taxon>
        <taxon>Pasteurellales</taxon>
        <taxon>Pasteurellaceae</taxon>
        <taxon>Haemophilus</taxon>
    </lineage>
</organism>
<sequence length="139" mass="15340">MGITALAFDFGTKSIGCAIGQSITGTAQALPAFKAQDGIPNWEAIEKCLKEWKPDVVIVGLPLNMDGTEQDLTLRARKFANRLQGRFGVNVHLQDERLTTTQARSEIFERGGFKALKKGKIDGVSACLILESWFEYAEY</sequence>
<dbReference type="EC" id="3.1.-.-" evidence="1"/>
<dbReference type="EMBL" id="CP000672">
    <property type="protein sequence ID" value="ABQ99828.1"/>
    <property type="molecule type" value="Genomic_DNA"/>
</dbReference>
<dbReference type="SMR" id="A5UGC3"/>
<dbReference type="KEGG" id="hiq:CGSHiGG_04340"/>
<dbReference type="HOGENOM" id="CLU_098240_3_0_6"/>
<dbReference type="Proteomes" id="UP000001990">
    <property type="component" value="Chromosome"/>
</dbReference>
<dbReference type="GO" id="GO:0005829">
    <property type="term" value="C:cytosol"/>
    <property type="evidence" value="ECO:0007669"/>
    <property type="project" value="TreeGrafter"/>
</dbReference>
<dbReference type="GO" id="GO:0004518">
    <property type="term" value="F:nuclease activity"/>
    <property type="evidence" value="ECO:0007669"/>
    <property type="project" value="UniProtKB-KW"/>
</dbReference>
<dbReference type="GO" id="GO:0000967">
    <property type="term" value="P:rRNA 5'-end processing"/>
    <property type="evidence" value="ECO:0007669"/>
    <property type="project" value="UniProtKB-UniRule"/>
</dbReference>
<dbReference type="CDD" id="cd16964">
    <property type="entry name" value="YqgF"/>
    <property type="match status" value="1"/>
</dbReference>
<dbReference type="FunFam" id="3.30.420.140:FF:000002">
    <property type="entry name" value="Putative pre-16S rRNA nuclease"/>
    <property type="match status" value="1"/>
</dbReference>
<dbReference type="Gene3D" id="3.30.420.140">
    <property type="entry name" value="YqgF/RNase H-like domain"/>
    <property type="match status" value="1"/>
</dbReference>
<dbReference type="HAMAP" id="MF_00651">
    <property type="entry name" value="Nuclease_YqgF"/>
    <property type="match status" value="1"/>
</dbReference>
<dbReference type="InterPro" id="IPR012337">
    <property type="entry name" value="RNaseH-like_sf"/>
</dbReference>
<dbReference type="InterPro" id="IPR005227">
    <property type="entry name" value="YqgF"/>
</dbReference>
<dbReference type="InterPro" id="IPR006641">
    <property type="entry name" value="YqgF/RNaseH-like_dom"/>
</dbReference>
<dbReference type="InterPro" id="IPR037027">
    <property type="entry name" value="YqgF/RNaseH-like_dom_sf"/>
</dbReference>
<dbReference type="NCBIfam" id="TIGR00250">
    <property type="entry name" value="RNAse_H_YqgF"/>
    <property type="match status" value="1"/>
</dbReference>
<dbReference type="PANTHER" id="PTHR33317">
    <property type="entry name" value="POLYNUCLEOTIDYL TRANSFERASE, RIBONUCLEASE H-LIKE SUPERFAMILY PROTEIN"/>
    <property type="match status" value="1"/>
</dbReference>
<dbReference type="PANTHER" id="PTHR33317:SF4">
    <property type="entry name" value="POLYNUCLEOTIDYL TRANSFERASE, RIBONUCLEASE H-LIKE SUPERFAMILY PROTEIN"/>
    <property type="match status" value="1"/>
</dbReference>
<dbReference type="Pfam" id="PF03652">
    <property type="entry name" value="RuvX"/>
    <property type="match status" value="1"/>
</dbReference>
<dbReference type="SMART" id="SM00732">
    <property type="entry name" value="YqgFc"/>
    <property type="match status" value="1"/>
</dbReference>
<dbReference type="SUPFAM" id="SSF53098">
    <property type="entry name" value="Ribonuclease H-like"/>
    <property type="match status" value="1"/>
</dbReference>
<comment type="function">
    <text evidence="1">Could be a nuclease involved in processing of the 5'-end of pre-16S rRNA.</text>
</comment>
<comment type="subcellular location">
    <subcellularLocation>
        <location evidence="1">Cytoplasm</location>
    </subcellularLocation>
</comment>
<comment type="similarity">
    <text evidence="1">Belongs to the YqgF nuclease family.</text>
</comment>
<reference key="1">
    <citation type="journal article" date="2007" name="Genome Biol.">
        <title>Characterization and modeling of the Haemophilus influenzae core and supragenomes based on the complete genomic sequences of Rd and 12 clinical nontypeable strains.</title>
        <authorList>
            <person name="Hogg J.S."/>
            <person name="Hu F.Z."/>
            <person name="Janto B."/>
            <person name="Boissy R."/>
            <person name="Hayes J."/>
            <person name="Keefe R."/>
            <person name="Post J.C."/>
            <person name="Ehrlich G.D."/>
        </authorList>
    </citation>
    <scope>NUCLEOTIDE SEQUENCE [LARGE SCALE GENOMIC DNA]</scope>
    <source>
        <strain>PittGG</strain>
    </source>
</reference>
<gene>
    <name type="ordered locus">CGSHiGG_04340</name>
</gene>
<protein>
    <recommendedName>
        <fullName evidence="1">Putative pre-16S rRNA nuclease</fullName>
        <ecNumber evidence="1">3.1.-.-</ecNumber>
    </recommendedName>
</protein>
<evidence type="ECO:0000255" key="1">
    <source>
        <dbReference type="HAMAP-Rule" id="MF_00651"/>
    </source>
</evidence>
<accession>A5UGC3</accession>
<keyword id="KW-0963">Cytoplasm</keyword>
<keyword id="KW-0378">Hydrolase</keyword>
<keyword id="KW-0540">Nuclease</keyword>
<keyword id="KW-0690">Ribosome biogenesis</keyword>